<protein>
    <recommendedName>
        <fullName evidence="1">Recombination protein RecR</fullName>
    </recommendedName>
</protein>
<accession>Q6G4V2</accession>
<reference key="1">
    <citation type="journal article" date="2004" name="Proc. Natl. Acad. Sci. U.S.A.">
        <title>The louse-borne human pathogen Bartonella quintana is a genomic derivative of the zoonotic agent Bartonella henselae.</title>
        <authorList>
            <person name="Alsmark U.C.M."/>
            <person name="Frank A.C."/>
            <person name="Karlberg E.O."/>
            <person name="Legault B.-A."/>
            <person name="Ardell D.H."/>
            <person name="Canbaeck B."/>
            <person name="Eriksson A.-S."/>
            <person name="Naeslund A.K."/>
            <person name="Handley S.A."/>
            <person name="Huvet M."/>
            <person name="La Scola B."/>
            <person name="Holmberg M."/>
            <person name="Andersson S.G.E."/>
        </authorList>
    </citation>
    <scope>NUCLEOTIDE SEQUENCE [LARGE SCALE GENOMIC DNA]</scope>
    <source>
        <strain>ATCC 49882 / DSM 28221 / CCUG 30454 / Houston 1</strain>
    </source>
</reference>
<sequence>MSKHIAGPEIERLIQLLARIPGLGPRSARRAALHLIKKKETLLEPLGAAIQAAVQKVCICSVCGNVDTIDPCSICTDPRRDDATIIVVEDIADLWALERAKTLAARYHVLGGKLSPLDGIGPDELNIAPLIQRVVQNPITEIILAVNATVEGQTTAHYITDQLSNFSVKVTRLAHGVPVGGELDYLDDGTLAAALQARTNL</sequence>
<keyword id="KW-0227">DNA damage</keyword>
<keyword id="KW-0233">DNA recombination</keyword>
<keyword id="KW-0234">DNA repair</keyword>
<keyword id="KW-0479">Metal-binding</keyword>
<keyword id="KW-0862">Zinc</keyword>
<keyword id="KW-0863">Zinc-finger</keyword>
<organism>
    <name type="scientific">Bartonella henselae (strain ATCC 49882 / DSM 28221 / CCUG 30454 / Houston 1)</name>
    <name type="common">Rochalimaea henselae</name>
    <dbReference type="NCBI Taxonomy" id="283166"/>
    <lineage>
        <taxon>Bacteria</taxon>
        <taxon>Pseudomonadati</taxon>
        <taxon>Pseudomonadota</taxon>
        <taxon>Alphaproteobacteria</taxon>
        <taxon>Hyphomicrobiales</taxon>
        <taxon>Bartonellaceae</taxon>
        <taxon>Bartonella</taxon>
    </lineage>
</organism>
<evidence type="ECO:0000255" key="1">
    <source>
        <dbReference type="HAMAP-Rule" id="MF_00017"/>
    </source>
</evidence>
<comment type="function">
    <text evidence="1">May play a role in DNA repair. It seems to be involved in an RecBC-independent recombinational process of DNA repair. It may act with RecF and RecO.</text>
</comment>
<comment type="similarity">
    <text evidence="1">Belongs to the RecR family.</text>
</comment>
<dbReference type="EMBL" id="BX897699">
    <property type="protein sequence ID" value="CAF27042.1"/>
    <property type="molecule type" value="Genomic_DNA"/>
</dbReference>
<dbReference type="RefSeq" id="WP_011180181.1">
    <property type="nucleotide sequence ID" value="NZ_LRIJ02000001.1"/>
</dbReference>
<dbReference type="SMR" id="Q6G4V2"/>
<dbReference type="PaxDb" id="283166-BH02300"/>
<dbReference type="EnsemblBacteria" id="CAF27042">
    <property type="protein sequence ID" value="CAF27042"/>
    <property type="gene ID" value="BH02300"/>
</dbReference>
<dbReference type="GeneID" id="92984897"/>
<dbReference type="KEGG" id="bhe:BH02300"/>
<dbReference type="eggNOG" id="COG0353">
    <property type="taxonomic scope" value="Bacteria"/>
</dbReference>
<dbReference type="OrthoDB" id="9802672at2"/>
<dbReference type="Proteomes" id="UP000000421">
    <property type="component" value="Chromosome"/>
</dbReference>
<dbReference type="GO" id="GO:0003677">
    <property type="term" value="F:DNA binding"/>
    <property type="evidence" value="ECO:0007669"/>
    <property type="project" value="UniProtKB-UniRule"/>
</dbReference>
<dbReference type="GO" id="GO:0008270">
    <property type="term" value="F:zinc ion binding"/>
    <property type="evidence" value="ECO:0007669"/>
    <property type="project" value="UniProtKB-KW"/>
</dbReference>
<dbReference type="GO" id="GO:0006310">
    <property type="term" value="P:DNA recombination"/>
    <property type="evidence" value="ECO:0007669"/>
    <property type="project" value="UniProtKB-UniRule"/>
</dbReference>
<dbReference type="GO" id="GO:0006281">
    <property type="term" value="P:DNA repair"/>
    <property type="evidence" value="ECO:0007669"/>
    <property type="project" value="UniProtKB-UniRule"/>
</dbReference>
<dbReference type="CDD" id="cd01025">
    <property type="entry name" value="TOPRIM_recR"/>
    <property type="match status" value="1"/>
</dbReference>
<dbReference type="Gene3D" id="3.40.1360.10">
    <property type="match status" value="1"/>
</dbReference>
<dbReference type="Gene3D" id="6.10.250.240">
    <property type="match status" value="1"/>
</dbReference>
<dbReference type="Gene3D" id="1.10.8.420">
    <property type="entry name" value="RecR Domain 1"/>
    <property type="match status" value="1"/>
</dbReference>
<dbReference type="HAMAP" id="MF_00017">
    <property type="entry name" value="RecR"/>
    <property type="match status" value="1"/>
</dbReference>
<dbReference type="InterPro" id="IPR000093">
    <property type="entry name" value="DNA_Rcmb_RecR"/>
</dbReference>
<dbReference type="InterPro" id="IPR023627">
    <property type="entry name" value="Rcmb_RecR"/>
</dbReference>
<dbReference type="InterPro" id="IPR015967">
    <property type="entry name" value="Rcmb_RecR_Znf"/>
</dbReference>
<dbReference type="InterPro" id="IPR006171">
    <property type="entry name" value="TOPRIM_dom"/>
</dbReference>
<dbReference type="InterPro" id="IPR034137">
    <property type="entry name" value="TOPRIM_RecR"/>
</dbReference>
<dbReference type="NCBIfam" id="TIGR00615">
    <property type="entry name" value="recR"/>
    <property type="match status" value="1"/>
</dbReference>
<dbReference type="PANTHER" id="PTHR30446">
    <property type="entry name" value="RECOMBINATION PROTEIN RECR"/>
    <property type="match status" value="1"/>
</dbReference>
<dbReference type="PANTHER" id="PTHR30446:SF0">
    <property type="entry name" value="RECOMBINATION PROTEIN RECR"/>
    <property type="match status" value="1"/>
</dbReference>
<dbReference type="Pfam" id="PF21175">
    <property type="entry name" value="RecR_C"/>
    <property type="match status" value="1"/>
</dbReference>
<dbReference type="Pfam" id="PF21176">
    <property type="entry name" value="RecR_HhH"/>
    <property type="match status" value="1"/>
</dbReference>
<dbReference type="Pfam" id="PF02132">
    <property type="entry name" value="RecR_ZnF"/>
    <property type="match status" value="1"/>
</dbReference>
<dbReference type="Pfam" id="PF13662">
    <property type="entry name" value="Toprim_4"/>
    <property type="match status" value="1"/>
</dbReference>
<dbReference type="SMART" id="SM00493">
    <property type="entry name" value="TOPRIM"/>
    <property type="match status" value="1"/>
</dbReference>
<dbReference type="SUPFAM" id="SSF111304">
    <property type="entry name" value="Recombination protein RecR"/>
    <property type="match status" value="1"/>
</dbReference>
<dbReference type="PROSITE" id="PS01300">
    <property type="entry name" value="RECR"/>
    <property type="match status" value="1"/>
</dbReference>
<dbReference type="PROSITE" id="PS50880">
    <property type="entry name" value="TOPRIM"/>
    <property type="match status" value="1"/>
</dbReference>
<gene>
    <name evidence="1" type="primary">recR</name>
    <name type="ordered locus">BH02300</name>
</gene>
<feature type="chain" id="PRO_0000190285" description="Recombination protein RecR">
    <location>
        <begin position="1"/>
        <end position="201"/>
    </location>
</feature>
<feature type="domain" description="Toprim" evidence="1">
    <location>
        <begin position="83"/>
        <end position="178"/>
    </location>
</feature>
<feature type="zinc finger region" description="C4-type" evidence="1">
    <location>
        <begin position="60"/>
        <end position="75"/>
    </location>
</feature>
<name>RECR_BARHE</name>
<proteinExistence type="inferred from homology"/>